<evidence type="ECO:0000255" key="1">
    <source>
        <dbReference type="HAMAP-Rule" id="MF_00268"/>
    </source>
</evidence>
<gene>
    <name evidence="1" type="primary">recA</name>
    <name type="ordered locus">HPP12_0152</name>
</gene>
<sequence length="347" mass="37669">MAIDEDKQKAISLAIKQIDKVFGKGALVRLGDKQVEKIDAISTGSLGLDLALGIGGVPKGRIIEIYGPESSGKTTLSLHIIAECQKNGGVCAFIDAEHALDVYYAKRLGVDTENLLVSQPSTGEEALEILETITRSGGIDLVVVDSVAALTPKAEIDGDMGDQHVGLQARLMSHALRKITGVLHKMNTTLIFINQIRMKIGMMGYGSPETTTGGNALKFYASVRIDIRRIASLKQNEQHIGNRAKAKVVKNKVAPPFREAEFDIMFGEGISKEGEIIDYGVKLDIVDKSGAWLSYQDKKLGQGRENAKALLKEDKALADEITLKIKESIGSNEEIMPLPDEPLEEME</sequence>
<proteinExistence type="inferred from homology"/>
<organism>
    <name type="scientific">Helicobacter pylori (strain P12)</name>
    <dbReference type="NCBI Taxonomy" id="570508"/>
    <lineage>
        <taxon>Bacteria</taxon>
        <taxon>Pseudomonadati</taxon>
        <taxon>Campylobacterota</taxon>
        <taxon>Epsilonproteobacteria</taxon>
        <taxon>Campylobacterales</taxon>
        <taxon>Helicobacteraceae</taxon>
        <taxon>Helicobacter</taxon>
    </lineage>
</organism>
<keyword id="KW-0067">ATP-binding</keyword>
<keyword id="KW-0963">Cytoplasm</keyword>
<keyword id="KW-0227">DNA damage</keyword>
<keyword id="KW-0233">DNA recombination</keyword>
<keyword id="KW-0234">DNA repair</keyword>
<keyword id="KW-0238">DNA-binding</keyword>
<keyword id="KW-0547">Nucleotide-binding</keyword>
<keyword id="KW-0742">SOS response</keyword>
<protein>
    <recommendedName>
        <fullName evidence="1">Protein RecA</fullName>
    </recommendedName>
    <alternativeName>
        <fullName evidence="1">Recombinase A</fullName>
    </alternativeName>
</protein>
<feature type="chain" id="PRO_1000114338" description="Protein RecA">
    <location>
        <begin position="1"/>
        <end position="347"/>
    </location>
</feature>
<feature type="binding site" evidence="1">
    <location>
        <begin position="67"/>
        <end position="74"/>
    </location>
    <ligand>
        <name>ATP</name>
        <dbReference type="ChEBI" id="CHEBI:30616"/>
    </ligand>
</feature>
<comment type="function">
    <text evidence="1">Can catalyze the hydrolysis of ATP in the presence of single-stranded DNA, the ATP-dependent uptake of single-stranded DNA by duplex DNA, and the ATP-dependent hybridization of homologous single-stranded DNAs. It interacts with LexA causing its activation and leading to its autocatalytic cleavage.</text>
</comment>
<comment type="subcellular location">
    <subcellularLocation>
        <location evidence="1">Cytoplasm</location>
    </subcellularLocation>
</comment>
<comment type="similarity">
    <text evidence="1">Belongs to the RecA family.</text>
</comment>
<dbReference type="EMBL" id="CP001217">
    <property type="protein sequence ID" value="ACJ07312.1"/>
    <property type="molecule type" value="Genomic_DNA"/>
</dbReference>
<dbReference type="SMR" id="B6JPQ1"/>
<dbReference type="KEGG" id="hpp:HPP12_0152"/>
<dbReference type="HOGENOM" id="CLU_040469_3_2_7"/>
<dbReference type="Proteomes" id="UP000008198">
    <property type="component" value="Chromosome"/>
</dbReference>
<dbReference type="GO" id="GO:0005829">
    <property type="term" value="C:cytosol"/>
    <property type="evidence" value="ECO:0007669"/>
    <property type="project" value="TreeGrafter"/>
</dbReference>
<dbReference type="GO" id="GO:0005524">
    <property type="term" value="F:ATP binding"/>
    <property type="evidence" value="ECO:0007669"/>
    <property type="project" value="UniProtKB-UniRule"/>
</dbReference>
<dbReference type="GO" id="GO:0016887">
    <property type="term" value="F:ATP hydrolysis activity"/>
    <property type="evidence" value="ECO:0007669"/>
    <property type="project" value="InterPro"/>
</dbReference>
<dbReference type="GO" id="GO:0140664">
    <property type="term" value="F:ATP-dependent DNA damage sensor activity"/>
    <property type="evidence" value="ECO:0007669"/>
    <property type="project" value="InterPro"/>
</dbReference>
<dbReference type="GO" id="GO:0003684">
    <property type="term" value="F:damaged DNA binding"/>
    <property type="evidence" value="ECO:0007669"/>
    <property type="project" value="UniProtKB-UniRule"/>
</dbReference>
<dbReference type="GO" id="GO:0003697">
    <property type="term" value="F:single-stranded DNA binding"/>
    <property type="evidence" value="ECO:0007669"/>
    <property type="project" value="UniProtKB-UniRule"/>
</dbReference>
<dbReference type="GO" id="GO:0006310">
    <property type="term" value="P:DNA recombination"/>
    <property type="evidence" value="ECO:0007669"/>
    <property type="project" value="UniProtKB-UniRule"/>
</dbReference>
<dbReference type="GO" id="GO:0006281">
    <property type="term" value="P:DNA repair"/>
    <property type="evidence" value="ECO:0007669"/>
    <property type="project" value="UniProtKB-UniRule"/>
</dbReference>
<dbReference type="GO" id="GO:0009432">
    <property type="term" value="P:SOS response"/>
    <property type="evidence" value="ECO:0007669"/>
    <property type="project" value="UniProtKB-UniRule"/>
</dbReference>
<dbReference type="CDD" id="cd00983">
    <property type="entry name" value="RecA"/>
    <property type="match status" value="1"/>
</dbReference>
<dbReference type="FunFam" id="3.40.50.300:FF:000087">
    <property type="entry name" value="Recombinase RecA"/>
    <property type="match status" value="1"/>
</dbReference>
<dbReference type="Gene3D" id="3.40.50.300">
    <property type="entry name" value="P-loop containing nucleotide triphosphate hydrolases"/>
    <property type="match status" value="1"/>
</dbReference>
<dbReference type="HAMAP" id="MF_00268">
    <property type="entry name" value="RecA"/>
    <property type="match status" value="1"/>
</dbReference>
<dbReference type="InterPro" id="IPR003593">
    <property type="entry name" value="AAA+_ATPase"/>
</dbReference>
<dbReference type="InterPro" id="IPR013765">
    <property type="entry name" value="DNA_recomb/repair_RecA"/>
</dbReference>
<dbReference type="InterPro" id="IPR020584">
    <property type="entry name" value="DNA_recomb/repair_RecA_CS"/>
</dbReference>
<dbReference type="InterPro" id="IPR027417">
    <property type="entry name" value="P-loop_NTPase"/>
</dbReference>
<dbReference type="InterPro" id="IPR049261">
    <property type="entry name" value="RecA-like_C"/>
</dbReference>
<dbReference type="InterPro" id="IPR049428">
    <property type="entry name" value="RecA-like_N"/>
</dbReference>
<dbReference type="InterPro" id="IPR020588">
    <property type="entry name" value="RecA_ATP-bd"/>
</dbReference>
<dbReference type="InterPro" id="IPR023400">
    <property type="entry name" value="RecA_C_sf"/>
</dbReference>
<dbReference type="InterPro" id="IPR020587">
    <property type="entry name" value="RecA_monomer-monomer_interface"/>
</dbReference>
<dbReference type="NCBIfam" id="TIGR02012">
    <property type="entry name" value="tigrfam_recA"/>
    <property type="match status" value="1"/>
</dbReference>
<dbReference type="PANTHER" id="PTHR45900:SF1">
    <property type="entry name" value="MITOCHONDRIAL DNA REPAIR PROTEIN RECA HOMOLOG-RELATED"/>
    <property type="match status" value="1"/>
</dbReference>
<dbReference type="PANTHER" id="PTHR45900">
    <property type="entry name" value="RECA"/>
    <property type="match status" value="1"/>
</dbReference>
<dbReference type="Pfam" id="PF00154">
    <property type="entry name" value="RecA"/>
    <property type="match status" value="1"/>
</dbReference>
<dbReference type="Pfam" id="PF21096">
    <property type="entry name" value="RecA_C"/>
    <property type="match status" value="1"/>
</dbReference>
<dbReference type="PRINTS" id="PR00142">
    <property type="entry name" value="RECA"/>
</dbReference>
<dbReference type="SMART" id="SM00382">
    <property type="entry name" value="AAA"/>
    <property type="match status" value="1"/>
</dbReference>
<dbReference type="SUPFAM" id="SSF52540">
    <property type="entry name" value="P-loop containing nucleoside triphosphate hydrolases"/>
    <property type="match status" value="1"/>
</dbReference>
<dbReference type="SUPFAM" id="SSF54752">
    <property type="entry name" value="RecA protein, C-terminal domain"/>
    <property type="match status" value="1"/>
</dbReference>
<dbReference type="PROSITE" id="PS00321">
    <property type="entry name" value="RECA_1"/>
    <property type="match status" value="1"/>
</dbReference>
<dbReference type="PROSITE" id="PS50162">
    <property type="entry name" value="RECA_2"/>
    <property type="match status" value="1"/>
</dbReference>
<dbReference type="PROSITE" id="PS50163">
    <property type="entry name" value="RECA_3"/>
    <property type="match status" value="1"/>
</dbReference>
<accession>B6JPQ1</accession>
<reference key="1">
    <citation type="submission" date="2008-10" db="EMBL/GenBank/DDBJ databases">
        <title>The complete genome sequence of Helicobacter pylori strain P12.</title>
        <authorList>
            <person name="Fischer W."/>
            <person name="Windhager L."/>
            <person name="Karnholz A."/>
            <person name="Zeiller M."/>
            <person name="Zimmer R."/>
            <person name="Haas R."/>
        </authorList>
    </citation>
    <scope>NUCLEOTIDE SEQUENCE [LARGE SCALE GENOMIC DNA]</scope>
    <source>
        <strain>P12</strain>
    </source>
</reference>
<name>RECA_HELP2</name>